<evidence type="ECO:0000250" key="1"/>
<evidence type="ECO:0000250" key="2">
    <source>
        <dbReference type="UniProtKB" id="Q6DD88"/>
    </source>
</evidence>
<evidence type="ECO:0000250" key="3">
    <source>
        <dbReference type="UniProtKB" id="Q8WXF7"/>
    </source>
</evidence>
<evidence type="ECO:0000255" key="4"/>
<evidence type="ECO:0000255" key="5">
    <source>
        <dbReference type="PROSITE-ProRule" id="PRU01052"/>
    </source>
</evidence>
<evidence type="ECO:0000256" key="6">
    <source>
        <dbReference type="SAM" id="MobiDB-lite"/>
    </source>
</evidence>
<evidence type="ECO:0000269" key="7">
    <source>
    </source>
</evidence>
<evidence type="ECO:0000303" key="8">
    <source>
    </source>
</evidence>
<evidence type="ECO:0000303" key="9">
    <source>
    </source>
</evidence>
<evidence type="ECO:0000305" key="10"/>
<evidence type="ECO:0000312" key="11">
    <source>
        <dbReference type="MGI" id="MGI:1924270"/>
    </source>
</evidence>
<sequence>MLSPQRTAAVASRGAGDAMENGKPGPVQVVLVHKEQHSFELEERALASVLLQDHIRDLDVVVVSVAGAFRKGKSFILDFMLRYLYSQKEGGHSDWLGDPEEPLTGFSWRGGSDPETTGIQIWSEVFTVKKPCGKKVAVVLMDTQGAFDSQSTVKDCATIFALSTMTSSVQIYNLSQNIQEDDLQQLQLFTEYGRLAMDEIFQKPFQTLMFLIRDWSFPYEYNYGLQGGMAFLDKRLHVKEHQHEEIQNVRNHIHSCFSDVTCFLLPHPGLQVATSPNFDGKLKDIASEFKEQLQALIPYVLNPSKLMEKEINGSKVTCRGLLEYFKAYIKIYQGEDLPHPKSMLQATAEANNLAAAASAKDIYYNNMEEICGGEKPYLSPDILEEKHLEFKQLALDHFKKIKKMGGKDFSFRYQQELEEEIKELYENFCKHNGSKNVFSTFRTPAVLFTGIAALYIASGFTGFIGLEVVAQLFNCMVGLLLIALLTWGYIRYSGQYRELGGAIDSGAAYVLEQASSHIGNSTQAAVRDAVVGRPPADKKSQ</sequence>
<proteinExistence type="evidence at protein level"/>
<protein>
    <recommendedName>
        <fullName evidence="2">Atlastin-3</fullName>
        <shortName evidence="9">ATL-3</shortName>
        <ecNumber evidence="2">3.6.5.-</ecNumber>
    </recommendedName>
</protein>
<gene>
    <name evidence="9 11" type="primary">Atl3</name>
</gene>
<accession>Q91YH5</accession>
<accession>Q3UGW3</accession>
<accession>Q8C0L7</accession>
<accession>Q8C174</accession>
<accession>Q99LZ9</accession>
<dbReference type="EC" id="3.6.5.-" evidence="2"/>
<dbReference type="EMBL" id="AK028842">
    <property type="protein sequence ID" value="BAC26148.1"/>
    <property type="molecule type" value="mRNA"/>
</dbReference>
<dbReference type="EMBL" id="AK030660">
    <property type="protein sequence ID" value="BAC27066.1"/>
    <property type="molecule type" value="mRNA"/>
</dbReference>
<dbReference type="EMBL" id="AK077752">
    <property type="protein sequence ID" value="BAC36992.1"/>
    <property type="molecule type" value="mRNA"/>
</dbReference>
<dbReference type="EMBL" id="AK147720">
    <property type="protein sequence ID" value="BAE28094.1"/>
    <property type="molecule type" value="mRNA"/>
</dbReference>
<dbReference type="EMBL" id="AK169476">
    <property type="protein sequence ID" value="BAE41194.1"/>
    <property type="molecule type" value="mRNA"/>
</dbReference>
<dbReference type="EMBL" id="BC002149">
    <property type="protein sequence ID" value="AAH02149.1"/>
    <property type="status" value="ALT_INIT"/>
    <property type="molecule type" value="mRNA"/>
</dbReference>
<dbReference type="EMBL" id="BC017138">
    <property type="protein sequence ID" value="AAH17138.1"/>
    <property type="molecule type" value="mRNA"/>
</dbReference>
<dbReference type="CCDS" id="CCDS29527.1">
    <molecule id="Q91YH5-1"/>
</dbReference>
<dbReference type="RefSeq" id="NP_001156977.1">
    <property type="nucleotide sequence ID" value="NM_001163505.1"/>
</dbReference>
<dbReference type="RefSeq" id="NP_666203.3">
    <molecule id="Q91YH5-1"/>
    <property type="nucleotide sequence ID" value="NM_146091.4"/>
</dbReference>
<dbReference type="SMR" id="Q91YH5"/>
<dbReference type="BioGRID" id="224585">
    <property type="interactions" value="4"/>
</dbReference>
<dbReference type="FunCoup" id="Q91YH5">
    <property type="interactions" value="2218"/>
</dbReference>
<dbReference type="IntAct" id="Q91YH5">
    <property type="interactions" value="1"/>
</dbReference>
<dbReference type="STRING" id="10090.ENSMUSP00000025668"/>
<dbReference type="GlyGen" id="Q91YH5">
    <property type="glycosylation" value="3 sites, 2 N-linked glycans (2 sites), 1 O-linked glycan (1 site)"/>
</dbReference>
<dbReference type="iPTMnet" id="Q91YH5"/>
<dbReference type="PhosphoSitePlus" id="Q91YH5"/>
<dbReference type="SwissPalm" id="Q91YH5"/>
<dbReference type="jPOST" id="Q91YH5"/>
<dbReference type="PaxDb" id="10090-ENSMUSP00000025668"/>
<dbReference type="PeptideAtlas" id="Q91YH5"/>
<dbReference type="ProteomicsDB" id="265152">
    <molecule id="Q91YH5-1"/>
</dbReference>
<dbReference type="ProteomicsDB" id="265153">
    <molecule id="Q91YH5-2"/>
</dbReference>
<dbReference type="Pumba" id="Q91YH5"/>
<dbReference type="Antibodypedia" id="28987">
    <property type="antibodies" value="232 antibodies from 27 providers"/>
</dbReference>
<dbReference type="DNASU" id="109168"/>
<dbReference type="Ensembl" id="ENSMUST00000025668.9">
    <molecule id="Q91YH5-1"/>
    <property type="protein sequence ID" value="ENSMUSP00000025668.8"/>
    <property type="gene ID" value="ENSMUSG00000024759.15"/>
</dbReference>
<dbReference type="GeneID" id="109168"/>
<dbReference type="KEGG" id="mmu:109168"/>
<dbReference type="UCSC" id="uc008glg.2">
    <molecule id="Q91YH5-1"/>
    <property type="organism name" value="mouse"/>
</dbReference>
<dbReference type="AGR" id="MGI:1924270"/>
<dbReference type="CTD" id="25923"/>
<dbReference type="MGI" id="MGI:1924270">
    <property type="gene designation" value="Atl3"/>
</dbReference>
<dbReference type="VEuPathDB" id="HostDB:ENSMUSG00000024759"/>
<dbReference type="eggNOG" id="KOG2037">
    <property type="taxonomic scope" value="Eukaryota"/>
</dbReference>
<dbReference type="GeneTree" id="ENSGT00940000158566"/>
<dbReference type="HOGENOM" id="CLU_021447_2_0_1"/>
<dbReference type="InParanoid" id="Q91YH5"/>
<dbReference type="OMA" id="QYQKNME"/>
<dbReference type="OrthoDB" id="7788754at2759"/>
<dbReference type="PhylomeDB" id="Q91YH5"/>
<dbReference type="TreeFam" id="TF105251"/>
<dbReference type="BioGRID-ORCS" id="109168">
    <property type="hits" value="0 hits in 77 CRISPR screens"/>
</dbReference>
<dbReference type="ChiTaRS" id="Atl3">
    <property type="organism name" value="mouse"/>
</dbReference>
<dbReference type="PRO" id="PR:Q91YH5"/>
<dbReference type="Proteomes" id="UP000000589">
    <property type="component" value="Chromosome 19"/>
</dbReference>
<dbReference type="RNAct" id="Q91YH5">
    <property type="molecule type" value="protein"/>
</dbReference>
<dbReference type="Bgee" id="ENSMUSG00000024759">
    <property type="expression patterns" value="Expressed in seminiferous tubule of testis and 227 other cell types or tissues"/>
</dbReference>
<dbReference type="ExpressionAtlas" id="Q91YH5">
    <property type="expression patterns" value="baseline and differential"/>
</dbReference>
<dbReference type="GO" id="GO:0098826">
    <property type="term" value="C:endoplasmic reticulum tubular network membrane"/>
    <property type="evidence" value="ECO:0000250"/>
    <property type="project" value="UniProtKB"/>
</dbReference>
<dbReference type="GO" id="GO:0005525">
    <property type="term" value="F:GTP binding"/>
    <property type="evidence" value="ECO:0007669"/>
    <property type="project" value="UniProtKB-KW"/>
</dbReference>
<dbReference type="GO" id="GO:0140523">
    <property type="term" value="F:GTPase-dependent fusogenic activity"/>
    <property type="evidence" value="ECO:0000250"/>
    <property type="project" value="UniProtKB"/>
</dbReference>
<dbReference type="GO" id="GO:0042802">
    <property type="term" value="F:identical protein binding"/>
    <property type="evidence" value="ECO:0000250"/>
    <property type="project" value="UniProtKB"/>
</dbReference>
<dbReference type="GO" id="GO:0071346">
    <property type="term" value="P:cellular response to type II interferon"/>
    <property type="evidence" value="ECO:0007669"/>
    <property type="project" value="UniProtKB-ARBA"/>
</dbReference>
<dbReference type="GO" id="GO:0016320">
    <property type="term" value="P:endoplasmic reticulum membrane fusion"/>
    <property type="evidence" value="ECO:0000250"/>
    <property type="project" value="UniProtKB"/>
</dbReference>
<dbReference type="GO" id="GO:1990809">
    <property type="term" value="P:endoplasmic reticulum tubular network membrane organization"/>
    <property type="evidence" value="ECO:0000250"/>
    <property type="project" value="UniProtKB"/>
</dbReference>
<dbReference type="CDD" id="cd01851">
    <property type="entry name" value="GBP"/>
    <property type="match status" value="1"/>
</dbReference>
<dbReference type="FunFam" id="1.20.58.420:FF:000001">
    <property type="entry name" value="Atlastin-1 isoform 1"/>
    <property type="match status" value="1"/>
</dbReference>
<dbReference type="FunFam" id="3.40.50.300:FF:000314">
    <property type="entry name" value="Atlastin-2 isoform 2"/>
    <property type="match status" value="1"/>
</dbReference>
<dbReference type="Gene3D" id="1.20.58.420">
    <property type="entry name" value="AHSP"/>
    <property type="match status" value="1"/>
</dbReference>
<dbReference type="Gene3D" id="3.40.50.300">
    <property type="entry name" value="P-loop containing nucleotide triphosphate hydrolases"/>
    <property type="match status" value="1"/>
</dbReference>
<dbReference type="InterPro" id="IPR030386">
    <property type="entry name" value="G_GB1_RHD3_dom"/>
</dbReference>
<dbReference type="InterPro" id="IPR003191">
    <property type="entry name" value="Guanylate-bd/ATL_C"/>
</dbReference>
<dbReference type="InterPro" id="IPR036543">
    <property type="entry name" value="Guanylate-bd_C_sf"/>
</dbReference>
<dbReference type="InterPro" id="IPR015894">
    <property type="entry name" value="Guanylate-bd_N"/>
</dbReference>
<dbReference type="InterPro" id="IPR027417">
    <property type="entry name" value="P-loop_NTPase"/>
</dbReference>
<dbReference type="PANTHER" id="PTHR10751">
    <property type="entry name" value="GUANYLATE BINDING PROTEIN"/>
    <property type="match status" value="1"/>
</dbReference>
<dbReference type="Pfam" id="PF02263">
    <property type="entry name" value="GBP"/>
    <property type="match status" value="1"/>
</dbReference>
<dbReference type="Pfam" id="PF02841">
    <property type="entry name" value="GBP_C"/>
    <property type="match status" value="1"/>
</dbReference>
<dbReference type="SUPFAM" id="SSF48340">
    <property type="entry name" value="Interferon-induced guanylate-binding protein 1 (GBP1), C-terminal domain"/>
    <property type="match status" value="1"/>
</dbReference>
<dbReference type="SUPFAM" id="SSF52540">
    <property type="entry name" value="P-loop containing nucleoside triphosphate hydrolases"/>
    <property type="match status" value="1"/>
</dbReference>
<dbReference type="PROSITE" id="PS51715">
    <property type="entry name" value="G_GB1_RHD3"/>
    <property type="match status" value="1"/>
</dbReference>
<feature type="chain" id="PRO_0000287110" description="Atlastin-3">
    <location>
        <begin position="1"/>
        <end position="541"/>
    </location>
</feature>
<feature type="topological domain" description="Cytoplasmic" evidence="1">
    <location>
        <begin position="1"/>
        <end position="445"/>
    </location>
</feature>
<feature type="transmembrane region" description="Helical" evidence="4">
    <location>
        <begin position="446"/>
        <end position="466"/>
    </location>
</feature>
<feature type="topological domain" description="Lumenal" evidence="4">
    <location>
        <position position="467"/>
    </location>
</feature>
<feature type="transmembrane region" description="Helical" evidence="4">
    <location>
        <begin position="468"/>
        <end position="488"/>
    </location>
</feature>
<feature type="topological domain" description="Cytoplasmic" evidence="1">
    <location>
        <begin position="489"/>
        <end position="541"/>
    </location>
</feature>
<feature type="domain" description="GB1/RHD3-type G" evidence="5">
    <location>
        <begin position="57"/>
        <end position="305"/>
    </location>
</feature>
<feature type="region of interest" description="N-terminal hypervariable region (HVR)" evidence="2">
    <location>
        <begin position="1"/>
        <end position="25"/>
    </location>
</feature>
<feature type="region of interest" description="Disordered" evidence="6">
    <location>
        <begin position="1"/>
        <end position="22"/>
    </location>
</feature>
<feature type="region of interest" description="3HB (three-helix bundle) domain" evidence="3">
    <location>
        <begin position="343"/>
        <end position="434"/>
    </location>
</feature>
<feature type="binding site" evidence="2">
    <location>
        <position position="70"/>
    </location>
    <ligand>
        <name>GDP</name>
        <dbReference type="ChEBI" id="CHEBI:58189"/>
    </ligand>
</feature>
<feature type="binding site" evidence="2">
    <location>
        <position position="71"/>
    </location>
    <ligand>
        <name>GDP</name>
        <dbReference type="ChEBI" id="CHEBI:58189"/>
    </ligand>
</feature>
<feature type="binding site" evidence="2">
    <location>
        <position position="72"/>
    </location>
    <ligand>
        <name>GDP</name>
        <dbReference type="ChEBI" id="CHEBI:58189"/>
    </ligand>
</feature>
<feature type="binding site" evidence="2">
    <location>
        <position position="73"/>
    </location>
    <ligand>
        <name>GDP</name>
        <dbReference type="ChEBI" id="CHEBI:58189"/>
    </ligand>
</feature>
<feature type="binding site" evidence="2">
    <location>
        <position position="74"/>
    </location>
    <ligand>
        <name>GDP</name>
        <dbReference type="ChEBI" id="CHEBI:58189"/>
    </ligand>
</feature>
<feature type="binding site" evidence="2">
    <location>
        <position position="75"/>
    </location>
    <ligand>
        <name>GDP</name>
        <dbReference type="ChEBI" id="CHEBI:58189"/>
    </ligand>
</feature>
<feature type="binding site" evidence="2">
    <location>
        <position position="109"/>
    </location>
    <ligand>
        <name>GDP</name>
        <dbReference type="ChEBI" id="CHEBI:58189"/>
    </ligand>
</feature>
<feature type="binding site" evidence="2">
    <location>
        <position position="142"/>
    </location>
    <ligand>
        <name>Mg(2+)</name>
        <dbReference type="ChEBI" id="CHEBI:18420"/>
    </ligand>
</feature>
<feature type="binding site" evidence="2">
    <location>
        <position position="213"/>
    </location>
    <ligand>
        <name>GDP</name>
        <dbReference type="ChEBI" id="CHEBI:58189"/>
    </ligand>
</feature>
<feature type="binding site" evidence="2">
    <location>
        <position position="214"/>
    </location>
    <ligand>
        <name>GDP</name>
        <dbReference type="ChEBI" id="CHEBI:58189"/>
    </ligand>
</feature>
<feature type="binding site" evidence="2">
    <location>
        <position position="272"/>
    </location>
    <ligand>
        <name>GDP</name>
        <dbReference type="ChEBI" id="CHEBI:58189"/>
    </ligand>
</feature>
<feature type="binding site" evidence="2">
    <location>
        <position position="275"/>
    </location>
    <ligand>
        <name>GDP</name>
        <dbReference type="ChEBI" id="CHEBI:58189"/>
    </ligand>
</feature>
<feature type="modified residue" description="N6-acetyllysine" evidence="2">
    <location>
        <position position="391"/>
    </location>
</feature>
<feature type="splice variant" id="VSP_025314" description="In isoform 2." evidence="8">
    <location>
        <begin position="1"/>
        <end position="164"/>
    </location>
</feature>
<feature type="sequence conflict" description="In Ref. 1; BAC27066." evidence="10" ref="1">
    <original>Q</original>
    <variation>K</variation>
    <location>
        <position position="271"/>
    </location>
</feature>
<feature type="sequence conflict" description="In Ref. 1; BAE28094." evidence="10" ref="1">
    <original>H</original>
    <variation>N</variation>
    <location>
        <position position="397"/>
    </location>
</feature>
<feature type="sequence conflict" description="In Ref. 1; BAC26148." evidence="10" ref="1">
    <original>Y</original>
    <variation>C</variation>
    <location>
        <position position="489"/>
    </location>
</feature>
<keyword id="KW-0007">Acetylation</keyword>
<keyword id="KW-0025">Alternative splicing</keyword>
<keyword id="KW-0256">Endoplasmic reticulum</keyword>
<keyword id="KW-0342">GTP-binding</keyword>
<keyword id="KW-0378">Hydrolase</keyword>
<keyword id="KW-0460">Magnesium</keyword>
<keyword id="KW-0472">Membrane</keyword>
<keyword id="KW-0479">Metal-binding</keyword>
<keyword id="KW-0547">Nucleotide-binding</keyword>
<keyword id="KW-1185">Reference proteome</keyword>
<keyword id="KW-0812">Transmembrane</keyword>
<keyword id="KW-1133">Transmembrane helix</keyword>
<comment type="function">
    <text evidence="2 3">Atlastin-3 (ATL3) is a membrane-anchored GTPase that mediates the GTP-dependent fusion of endoplasmic reticulum (ER) membranes, maintaining the continuous ER network. It facilitates the formation of three-way junctions where ER tubules intersect (By similarity). Two atlastin-3 on neighboring ER tubules bind GTP and form loose homodimers through the GB1/RHD3-type G domains and 3HB regions. Upon GTP hydrolysis, the 3HB regions tighten, pulling the membranes together to drive their fusion. After fusion, the homodimer disassembles upon release of inorganic phosphate (Pi). Subsequently, GDP dissociates, resetting the monomers to a conformation ready for a new fusion cycle (By similarity).</text>
</comment>
<comment type="catalytic activity">
    <reaction evidence="2">
        <text>GTP + H2O = GDP + phosphate + H(+)</text>
        <dbReference type="Rhea" id="RHEA:19669"/>
        <dbReference type="ChEBI" id="CHEBI:15377"/>
        <dbReference type="ChEBI" id="CHEBI:15378"/>
        <dbReference type="ChEBI" id="CHEBI:37565"/>
        <dbReference type="ChEBI" id="CHEBI:43474"/>
        <dbReference type="ChEBI" id="CHEBI:58189"/>
    </reaction>
    <physiologicalReaction direction="left-to-right" evidence="2">
        <dbReference type="Rhea" id="RHEA:19670"/>
    </physiologicalReaction>
</comment>
<comment type="subunit">
    <text evidence="2 7">Monomeric and homodimeric. The homodimer, transiently formed by two molecules on opposing membranes, is the active form mediating ER membrane fusion. Interacts with ZFYVE27; both proteins are involved in endoplasmic reticulum tubular network organization (By similarity). Interacts with REEP5; both proteins are involved in endoplasmic reticulum tubular network organization (PubMed:32075961).</text>
</comment>
<comment type="subcellular location">
    <subcellularLocation>
        <location evidence="7">Endoplasmic reticulum membrane</location>
        <topology evidence="2">Multi-pass membrane protein</topology>
    </subcellularLocation>
    <text evidence="2">Localizes to endoplasmic reticulum tubules and accumulates in punctuate structures corresponding to 3-way junctions, which represent crossing-points at which the tubules build a polygonal network.</text>
</comment>
<comment type="alternative products">
    <event type="alternative splicing"/>
    <isoform>
        <id>Q91YH5-1</id>
        <name>1</name>
        <sequence type="displayed"/>
    </isoform>
    <isoform>
        <id>Q91YH5-2</id>
        <name>2</name>
        <sequence type="described" ref="VSP_025314"/>
    </isoform>
</comment>
<comment type="tissue specificity">
    <text evidence="7">Expressed in cardiomyocytes (at protein level).</text>
</comment>
<comment type="domain">
    <text evidence="2">The GB1/RHD3-type G domain mediates GTP-binding and hydrolysis as well as homodimerization.</text>
</comment>
<comment type="domain">
    <text evidence="3">The two three-helix bundle (3HB) regions in the homodimer are loosely associated initially, but they tighten upon GTP hydrolysis, facilitating the fusion of membranes.</text>
</comment>
<comment type="similarity">
    <text evidence="5">Belongs to the TRAFAC class dynamin-like GTPase superfamily. GB1/RHD3 GTPase family. GB1 subfamily.</text>
</comment>
<comment type="sequence caution" evidence="10">
    <conflict type="erroneous initiation">
        <sequence resource="EMBL-CDS" id="AAH02149"/>
    </conflict>
</comment>
<organism>
    <name type="scientific">Mus musculus</name>
    <name type="common">Mouse</name>
    <dbReference type="NCBI Taxonomy" id="10090"/>
    <lineage>
        <taxon>Eukaryota</taxon>
        <taxon>Metazoa</taxon>
        <taxon>Chordata</taxon>
        <taxon>Craniata</taxon>
        <taxon>Vertebrata</taxon>
        <taxon>Euteleostomi</taxon>
        <taxon>Mammalia</taxon>
        <taxon>Eutheria</taxon>
        <taxon>Euarchontoglires</taxon>
        <taxon>Glires</taxon>
        <taxon>Rodentia</taxon>
        <taxon>Myomorpha</taxon>
        <taxon>Muroidea</taxon>
        <taxon>Muridae</taxon>
        <taxon>Murinae</taxon>
        <taxon>Mus</taxon>
        <taxon>Mus</taxon>
    </lineage>
</organism>
<name>ATLA3_MOUSE</name>
<reference key="1">
    <citation type="journal article" date="2005" name="Science">
        <title>The transcriptional landscape of the mammalian genome.</title>
        <authorList>
            <person name="Carninci P."/>
            <person name="Kasukawa T."/>
            <person name="Katayama S."/>
            <person name="Gough J."/>
            <person name="Frith M.C."/>
            <person name="Maeda N."/>
            <person name="Oyama R."/>
            <person name="Ravasi T."/>
            <person name="Lenhard B."/>
            <person name="Wells C."/>
            <person name="Kodzius R."/>
            <person name="Shimokawa K."/>
            <person name="Bajic V.B."/>
            <person name="Brenner S.E."/>
            <person name="Batalov S."/>
            <person name="Forrest A.R."/>
            <person name="Zavolan M."/>
            <person name="Davis M.J."/>
            <person name="Wilming L.G."/>
            <person name="Aidinis V."/>
            <person name="Allen J.E."/>
            <person name="Ambesi-Impiombato A."/>
            <person name="Apweiler R."/>
            <person name="Aturaliya R.N."/>
            <person name="Bailey T.L."/>
            <person name="Bansal M."/>
            <person name="Baxter L."/>
            <person name="Beisel K.W."/>
            <person name="Bersano T."/>
            <person name="Bono H."/>
            <person name="Chalk A.M."/>
            <person name="Chiu K.P."/>
            <person name="Choudhary V."/>
            <person name="Christoffels A."/>
            <person name="Clutterbuck D.R."/>
            <person name="Crowe M.L."/>
            <person name="Dalla E."/>
            <person name="Dalrymple B.P."/>
            <person name="de Bono B."/>
            <person name="Della Gatta G."/>
            <person name="di Bernardo D."/>
            <person name="Down T."/>
            <person name="Engstrom P."/>
            <person name="Fagiolini M."/>
            <person name="Faulkner G."/>
            <person name="Fletcher C.F."/>
            <person name="Fukushima T."/>
            <person name="Furuno M."/>
            <person name="Futaki S."/>
            <person name="Gariboldi M."/>
            <person name="Georgii-Hemming P."/>
            <person name="Gingeras T.R."/>
            <person name="Gojobori T."/>
            <person name="Green R.E."/>
            <person name="Gustincich S."/>
            <person name="Harbers M."/>
            <person name="Hayashi Y."/>
            <person name="Hensch T.K."/>
            <person name="Hirokawa N."/>
            <person name="Hill D."/>
            <person name="Huminiecki L."/>
            <person name="Iacono M."/>
            <person name="Ikeo K."/>
            <person name="Iwama A."/>
            <person name="Ishikawa T."/>
            <person name="Jakt M."/>
            <person name="Kanapin A."/>
            <person name="Katoh M."/>
            <person name="Kawasawa Y."/>
            <person name="Kelso J."/>
            <person name="Kitamura H."/>
            <person name="Kitano H."/>
            <person name="Kollias G."/>
            <person name="Krishnan S.P."/>
            <person name="Kruger A."/>
            <person name="Kummerfeld S.K."/>
            <person name="Kurochkin I.V."/>
            <person name="Lareau L.F."/>
            <person name="Lazarevic D."/>
            <person name="Lipovich L."/>
            <person name="Liu J."/>
            <person name="Liuni S."/>
            <person name="McWilliam S."/>
            <person name="Madan Babu M."/>
            <person name="Madera M."/>
            <person name="Marchionni L."/>
            <person name="Matsuda H."/>
            <person name="Matsuzawa S."/>
            <person name="Miki H."/>
            <person name="Mignone F."/>
            <person name="Miyake S."/>
            <person name="Morris K."/>
            <person name="Mottagui-Tabar S."/>
            <person name="Mulder N."/>
            <person name="Nakano N."/>
            <person name="Nakauchi H."/>
            <person name="Ng P."/>
            <person name="Nilsson R."/>
            <person name="Nishiguchi S."/>
            <person name="Nishikawa S."/>
            <person name="Nori F."/>
            <person name="Ohara O."/>
            <person name="Okazaki Y."/>
            <person name="Orlando V."/>
            <person name="Pang K.C."/>
            <person name="Pavan W.J."/>
            <person name="Pavesi G."/>
            <person name="Pesole G."/>
            <person name="Petrovsky N."/>
            <person name="Piazza S."/>
            <person name="Reed J."/>
            <person name="Reid J.F."/>
            <person name="Ring B.Z."/>
            <person name="Ringwald M."/>
            <person name="Rost B."/>
            <person name="Ruan Y."/>
            <person name="Salzberg S.L."/>
            <person name="Sandelin A."/>
            <person name="Schneider C."/>
            <person name="Schoenbach C."/>
            <person name="Sekiguchi K."/>
            <person name="Semple C.A."/>
            <person name="Seno S."/>
            <person name="Sessa L."/>
            <person name="Sheng Y."/>
            <person name="Shibata Y."/>
            <person name="Shimada H."/>
            <person name="Shimada K."/>
            <person name="Silva D."/>
            <person name="Sinclair B."/>
            <person name="Sperling S."/>
            <person name="Stupka E."/>
            <person name="Sugiura K."/>
            <person name="Sultana R."/>
            <person name="Takenaka Y."/>
            <person name="Taki K."/>
            <person name="Tammoja K."/>
            <person name="Tan S.L."/>
            <person name="Tang S."/>
            <person name="Taylor M.S."/>
            <person name="Tegner J."/>
            <person name="Teichmann S.A."/>
            <person name="Ueda H.R."/>
            <person name="van Nimwegen E."/>
            <person name="Verardo R."/>
            <person name="Wei C.L."/>
            <person name="Yagi K."/>
            <person name="Yamanishi H."/>
            <person name="Zabarovsky E."/>
            <person name="Zhu S."/>
            <person name="Zimmer A."/>
            <person name="Hide W."/>
            <person name="Bult C."/>
            <person name="Grimmond S.M."/>
            <person name="Teasdale R.D."/>
            <person name="Liu E.T."/>
            <person name="Brusic V."/>
            <person name="Quackenbush J."/>
            <person name="Wahlestedt C."/>
            <person name="Mattick J.S."/>
            <person name="Hume D.A."/>
            <person name="Kai C."/>
            <person name="Sasaki D."/>
            <person name="Tomaru Y."/>
            <person name="Fukuda S."/>
            <person name="Kanamori-Katayama M."/>
            <person name="Suzuki M."/>
            <person name="Aoki J."/>
            <person name="Arakawa T."/>
            <person name="Iida J."/>
            <person name="Imamura K."/>
            <person name="Itoh M."/>
            <person name="Kato T."/>
            <person name="Kawaji H."/>
            <person name="Kawagashira N."/>
            <person name="Kawashima T."/>
            <person name="Kojima M."/>
            <person name="Kondo S."/>
            <person name="Konno H."/>
            <person name="Nakano K."/>
            <person name="Ninomiya N."/>
            <person name="Nishio T."/>
            <person name="Okada M."/>
            <person name="Plessy C."/>
            <person name="Shibata K."/>
            <person name="Shiraki T."/>
            <person name="Suzuki S."/>
            <person name="Tagami M."/>
            <person name="Waki K."/>
            <person name="Watahiki A."/>
            <person name="Okamura-Oho Y."/>
            <person name="Suzuki H."/>
            <person name="Kawai J."/>
            <person name="Hayashizaki Y."/>
        </authorList>
    </citation>
    <scope>NUCLEOTIDE SEQUENCE [LARGE SCALE MRNA] (ISOFORM 1)</scope>
    <source>
        <strain>C57BL/6J</strain>
        <tissue>Embryo</tissue>
        <tissue>Head</tissue>
        <tissue>Skin</tissue>
        <tissue>Thymus</tissue>
    </source>
</reference>
<reference key="2">
    <citation type="journal article" date="2004" name="Genome Res.">
        <title>The status, quality, and expansion of the NIH full-length cDNA project: the Mammalian Gene Collection (MGC).</title>
        <authorList>
            <consortium name="The MGC Project Team"/>
        </authorList>
    </citation>
    <scope>NUCLEOTIDE SEQUENCE [LARGE SCALE MRNA] (ISOFORMS 1 AND 2)</scope>
    <source>
        <strain>FVB/N</strain>
        <tissue>Mammary tumor</tissue>
    </source>
</reference>
<reference key="3">
    <citation type="journal article" date="2010" name="Cell">
        <title>A tissue-specific atlas of mouse protein phosphorylation and expression.</title>
        <authorList>
            <person name="Huttlin E.L."/>
            <person name="Jedrychowski M.P."/>
            <person name="Elias J.E."/>
            <person name="Goswami T."/>
            <person name="Rad R."/>
            <person name="Beausoleil S.A."/>
            <person name="Villen J."/>
            <person name="Haas W."/>
            <person name="Sowa M.E."/>
            <person name="Gygi S.P."/>
        </authorList>
    </citation>
    <scope>IDENTIFICATION BY MASS SPECTROMETRY [LARGE SCALE ANALYSIS]</scope>
    <source>
        <tissue>Brain</tissue>
        <tissue>Brown adipose tissue</tissue>
        <tissue>Heart</tissue>
        <tissue>Kidney</tissue>
        <tissue>Liver</tissue>
        <tissue>Lung</tissue>
        <tissue>Pancreas</tissue>
        <tissue>Spleen</tissue>
        <tissue>Testis</tissue>
    </source>
</reference>
<reference key="4">
    <citation type="journal article" date="2020" name="Nat. Commun.">
        <title>REEP5 depletion causes sarco-endoplasmic reticulum vacuolization and cardiac functional defects.</title>
        <authorList>
            <person name="Lee S.H."/>
            <person name="Hadipour-Lakmehsari S."/>
            <person name="Murthy H.R."/>
            <person name="Gibb N."/>
            <person name="Miyake T."/>
            <person name="Teng A.C.T."/>
            <person name="Cosme J."/>
            <person name="Yu J.C."/>
            <person name="Moon M."/>
            <person name="Lim S."/>
            <person name="Wong V."/>
            <person name="Liu P."/>
            <person name="Billia F."/>
            <person name="Fernandez-Gonzalez R."/>
            <person name="Stagljar I."/>
            <person name="Sharma P."/>
            <person name="Kislinger T."/>
            <person name="Scott I.C."/>
            <person name="Gramolini A.O."/>
        </authorList>
    </citation>
    <scope>INTERACTION WITH REEP5</scope>
    <scope>SUBCELLULAR LOCATION</scope>
    <scope>TISSUE SPECIFICITY</scope>
</reference>